<sequence length="476" mass="52338">MGIKFLEVIKPFCAVLPEIQKPERKIQFREKVLWTAITLFIFLVCCQIPLFGIMSSDSADPFYWMRVILASNRGTLMELGISPIVTSGLIMQLLAGAKIIEVGDTPKDRALFNGAQKLFGMIITIGQAIVYVMTGMYGDPSEMGAGICLVIIIQLFVAGLIVLLLDELLQKGYGLGSGISLFIATNICETIVWKAFSPTTVNTGRGTEFEGAIIALFHLLATRTDKVRALREAFYRQNLPNLMNLIATVFVFAVVIYFQGFRVDLPIKSARYRGQYNTYPIKLFYTSNIPIILQSALVSNLYVISQMLSTRFSGNFLVNLLGTWSDTSTGGPARAYPVGGLCYYFSPPESFGSVLDDPVHASIYIVFMLGSCAFFSKTWIEVSGSSAKDVAKQLKEQQMVMRGHRETSMVHELNRYIPTAAAFGGLCIGGLSVMADFLGAIGSGTGILLAVTIIYQYFEIFVKEQSEMGSMGALLF</sequence>
<evidence type="ECO:0000250" key="1"/>
<evidence type="ECO:0000250" key="2">
    <source>
        <dbReference type="UniProtKB" id="P38377"/>
    </source>
</evidence>
<evidence type="ECO:0000250" key="3">
    <source>
        <dbReference type="UniProtKB" id="P61619"/>
    </source>
</evidence>
<evidence type="ECO:0000255" key="4"/>
<evidence type="ECO:0000305" key="5"/>
<gene>
    <name type="primary">sec61a</name>
</gene>
<comment type="function">
    <text evidence="3">Component of SEC61 channel-forming translocon complex that mediates transport of signal peptide-containing precursor polypeptides across the endoplasmic reticulum (ER). Forms a ribosome receptor and a gated pore in the ER membrane, both functions required for cotranslational translocation of nascent polypeptides. May cooperate with auxiliary protein SEC62, SEC63 and HSPA5/BiP to enable post-translational transport of small presecretory proteins. The SEC61 channel is also involved in ER membrane insertion of transmembrane proteins: it mediates membrane insertion of the first few transmembrane segments of proteins, while insertion of subsequent transmembrane regions of multi-pass membrane proteins is mediated by the multi-pass translocon (MPT) complex.</text>
</comment>
<comment type="subunit">
    <text evidence="2 3">The SEC61 channel-forming translocon complex consists of channel-forming core components SEC61A1, SEC61B and SEC61G and different auxiliary components such as SEC62 and SEC63 (By similarity). The SEC61 channel associates with the multi-pass translocon (MPT) complex (By similarity).</text>
</comment>
<comment type="subcellular location">
    <subcellularLocation>
        <location evidence="3">Endoplasmic reticulum membrane</location>
        <topology evidence="3">Multi-pass membrane protein</topology>
    </subcellularLocation>
</comment>
<comment type="similarity">
    <text evidence="5">Belongs to the SecY/SEC61-alpha family.</text>
</comment>
<proteinExistence type="evidence at transcript level"/>
<keyword id="KW-0217">Developmental protein</keyword>
<keyword id="KW-0256">Endoplasmic reticulum</keyword>
<keyword id="KW-0472">Membrane</keyword>
<keyword id="KW-0653">Protein transport</keyword>
<keyword id="KW-0811">Translocation</keyword>
<keyword id="KW-0812">Transmembrane</keyword>
<keyword id="KW-1133">Transmembrane helix</keyword>
<keyword id="KW-0813">Transport</keyword>
<name>SC61A_GADOC</name>
<protein>
    <recommendedName>
        <fullName>Protein transport protein Sec61 subunit alpha</fullName>
    </recommendedName>
</protein>
<dbReference type="EMBL" id="AY103475">
    <property type="protein sequence ID" value="AAM52491.1"/>
    <property type="molecule type" value="mRNA"/>
</dbReference>
<dbReference type="SMR" id="Q8AY32"/>
<dbReference type="GO" id="GO:0005789">
    <property type="term" value="C:endoplasmic reticulum membrane"/>
    <property type="evidence" value="ECO:0000250"/>
    <property type="project" value="UniProtKB"/>
</dbReference>
<dbReference type="GO" id="GO:0039019">
    <property type="term" value="P:pronephric nephron development"/>
    <property type="evidence" value="ECO:0000250"/>
    <property type="project" value="UniProtKB"/>
</dbReference>
<dbReference type="GO" id="GO:0045047">
    <property type="term" value="P:protein targeting to ER"/>
    <property type="evidence" value="ECO:0000250"/>
    <property type="project" value="UniProtKB"/>
</dbReference>
<dbReference type="GO" id="GO:0015031">
    <property type="term" value="P:protein transport"/>
    <property type="evidence" value="ECO:0007669"/>
    <property type="project" value="UniProtKB-KW"/>
</dbReference>
<dbReference type="FunFam" id="1.10.3370.10:FF:000002">
    <property type="entry name" value="Transport Sec61 subunit alpha isoform 2"/>
    <property type="match status" value="1"/>
</dbReference>
<dbReference type="Gene3D" id="1.10.3370.10">
    <property type="entry name" value="SecY subunit domain"/>
    <property type="match status" value="1"/>
</dbReference>
<dbReference type="InterPro" id="IPR002208">
    <property type="entry name" value="SecY/SEC61-alpha"/>
</dbReference>
<dbReference type="InterPro" id="IPR030659">
    <property type="entry name" value="SecY_CS"/>
</dbReference>
<dbReference type="InterPro" id="IPR023201">
    <property type="entry name" value="SecY_dom_sf"/>
</dbReference>
<dbReference type="InterPro" id="IPR019561">
    <property type="entry name" value="Translocon_Sec61/SecY_plug_dom"/>
</dbReference>
<dbReference type="NCBIfam" id="TIGR00967">
    <property type="entry name" value="3a0501s007"/>
    <property type="match status" value="1"/>
</dbReference>
<dbReference type="NCBIfam" id="NF006341">
    <property type="entry name" value="PRK08568.1-5"/>
    <property type="match status" value="1"/>
</dbReference>
<dbReference type="PANTHER" id="PTHR10906">
    <property type="entry name" value="SECY/SEC61-ALPHA FAMILY MEMBER"/>
    <property type="match status" value="1"/>
</dbReference>
<dbReference type="Pfam" id="PF10559">
    <property type="entry name" value="Plug_translocon"/>
    <property type="match status" value="1"/>
</dbReference>
<dbReference type="Pfam" id="PF00344">
    <property type="entry name" value="SecY"/>
    <property type="match status" value="1"/>
</dbReference>
<dbReference type="PIRSF" id="PIRSF004557">
    <property type="entry name" value="SecY"/>
    <property type="match status" value="1"/>
</dbReference>
<dbReference type="SUPFAM" id="SSF103491">
    <property type="entry name" value="Preprotein translocase SecY subunit"/>
    <property type="match status" value="1"/>
</dbReference>
<dbReference type="PROSITE" id="PS00755">
    <property type="entry name" value="SECY_1"/>
    <property type="match status" value="1"/>
</dbReference>
<dbReference type="PROSITE" id="PS00756">
    <property type="entry name" value="SECY_2"/>
    <property type="match status" value="1"/>
</dbReference>
<organism>
    <name type="scientific">Gadus ogac</name>
    <name type="common">Greenland cod</name>
    <dbReference type="NCBI Taxonomy" id="8052"/>
    <lineage>
        <taxon>Eukaryota</taxon>
        <taxon>Metazoa</taxon>
        <taxon>Chordata</taxon>
        <taxon>Craniata</taxon>
        <taxon>Vertebrata</taxon>
        <taxon>Euteleostomi</taxon>
        <taxon>Actinopterygii</taxon>
        <taxon>Neopterygii</taxon>
        <taxon>Teleostei</taxon>
        <taxon>Neoteleostei</taxon>
        <taxon>Acanthomorphata</taxon>
        <taxon>Zeiogadaria</taxon>
        <taxon>Gadariae</taxon>
        <taxon>Gadiformes</taxon>
        <taxon>Gadoidei</taxon>
        <taxon>Gadidae</taxon>
        <taxon>Gadus</taxon>
    </lineage>
</organism>
<feature type="initiator methionine" description="Removed" evidence="1">
    <location>
        <position position="1"/>
    </location>
</feature>
<feature type="chain" id="PRO_0000131802" description="Protein transport protein Sec61 subunit alpha">
    <location>
        <begin position="2"/>
        <end position="476"/>
    </location>
</feature>
<feature type="topological domain" description="Cytoplasmic" evidence="4">
    <location>
        <begin position="2"/>
        <end position="33"/>
    </location>
</feature>
<feature type="transmembrane region" description="Helical" evidence="4">
    <location>
        <begin position="34"/>
        <end position="53"/>
    </location>
</feature>
<feature type="topological domain" description="Lumenal" evidence="4">
    <location>
        <begin position="54"/>
        <end position="76"/>
    </location>
</feature>
<feature type="transmembrane region" description="Helical" evidence="4">
    <location>
        <begin position="77"/>
        <end position="96"/>
    </location>
</feature>
<feature type="topological domain" description="Cytoplasmic" evidence="4">
    <location>
        <begin position="97"/>
        <end position="117"/>
    </location>
</feature>
<feature type="transmembrane region" description="Helical" evidence="4">
    <location>
        <begin position="118"/>
        <end position="138"/>
    </location>
</feature>
<feature type="topological domain" description="Lumenal" evidence="4">
    <location>
        <begin position="139"/>
        <end position="144"/>
    </location>
</feature>
<feature type="transmembrane region" description="Helical" evidence="4">
    <location>
        <begin position="145"/>
        <end position="165"/>
    </location>
</feature>
<feature type="topological domain" description="Cytoplasmic" evidence="4">
    <location>
        <begin position="166"/>
        <end position="172"/>
    </location>
</feature>
<feature type="transmembrane region" description="Helical" evidence="4">
    <location>
        <begin position="173"/>
        <end position="193"/>
    </location>
</feature>
<feature type="topological domain" description="Lumenal" evidence="4">
    <location>
        <begin position="194"/>
        <end position="240"/>
    </location>
</feature>
<feature type="transmembrane region" description="Helical" evidence="4">
    <location>
        <begin position="241"/>
        <end position="261"/>
    </location>
</feature>
<feature type="topological domain" description="Cytoplasmic" evidence="4">
    <location>
        <begin position="262"/>
        <end position="288"/>
    </location>
</feature>
<feature type="transmembrane region" description="Helical" evidence="4">
    <location>
        <begin position="289"/>
        <end position="309"/>
    </location>
</feature>
<feature type="topological domain" description="Lumenal" evidence="4">
    <location>
        <begin position="310"/>
        <end position="354"/>
    </location>
</feature>
<feature type="transmembrane region" description="Helical" evidence="4">
    <location>
        <begin position="355"/>
        <end position="375"/>
    </location>
</feature>
<feature type="topological domain" description="Cytoplasmic" evidence="4">
    <location>
        <begin position="376"/>
        <end position="420"/>
    </location>
</feature>
<feature type="transmembrane region" description="Helical" evidence="4">
    <location>
        <begin position="421"/>
        <end position="441"/>
    </location>
</feature>
<feature type="topological domain" description="Lumenal" evidence="4">
    <location>
        <begin position="442"/>
        <end position="445"/>
    </location>
</feature>
<feature type="transmembrane region" description="Helical" evidence="4">
    <location>
        <begin position="446"/>
        <end position="462"/>
    </location>
</feature>
<feature type="topological domain" description="Cytoplasmic" evidence="4">
    <location>
        <begin position="463"/>
        <end position="476"/>
    </location>
</feature>
<accession>Q8AY32</accession>
<reference key="1">
    <citation type="journal article" date="2003" name="J. Cell Sci.">
        <title>Protein translocation across the endoplasmic reticulum membrane in cold-adapted organisms.</title>
        <authorList>
            <person name="Romisch K."/>
            <person name="Collie N."/>
            <person name="Soto N."/>
            <person name="Logue J."/>
            <person name="Lindsay M."/>
            <person name="Scheper W."/>
            <person name="Cheng C.-H.C."/>
        </authorList>
    </citation>
    <scope>NUCLEOTIDE SEQUENCE [MRNA]</scope>
    <source>
        <tissue>Liver</tissue>
    </source>
</reference>